<sequence length="502" mass="56635">MKIAVIGAGVTGLAAAARIASQGHEVTIFEKNNNVGGRMNQLKKDGFTFDMGPAIVMMPDVYKDVFTMCGKNYEDYIELRQLRYIYDVYFDRDDCITVPTDLAELQHMLESIEPGSTHGFMSFLTDVYKKYEIARRYFLERTYRKPSDFYNMTSLVQGAKLKTLNHADQLIEHYIDNEKIQKLLAFQTLYIGIDPKRGPSLYSIIPMIEMMFGVHFIKGGMYGMAQGLAQLNKDLGVNIELNAEIEQIIIDPKFKRADAIKVNGDIRKFDKILCTADFPSVAESLMPDFAPIKKYPPHKIADLDYSCSAFLMYIGIDIDVTDQVRLHNVIFADDFRGNIEEIFEGRLSHDPSIYVYVPAVADKSLAPQGQTGIYVLMPTPELKTGSGIDWSDEALTDQIKDVIYRKLATIEVFEDIKSHIVSETIFTPNDFEQTYHAKFGSAFGLMPTLAQSNYYRPQNVSRDYKDLYFAGASTHPGAGVPIVLTSAKITVDEMIKDIEQGV</sequence>
<organism>
    <name type="scientific">Staphylococcus aureus (strain MRSA252)</name>
    <dbReference type="NCBI Taxonomy" id="282458"/>
    <lineage>
        <taxon>Bacteria</taxon>
        <taxon>Bacillati</taxon>
        <taxon>Bacillota</taxon>
        <taxon>Bacilli</taxon>
        <taxon>Bacillales</taxon>
        <taxon>Staphylococcaceae</taxon>
        <taxon>Staphylococcus</taxon>
    </lineage>
</organism>
<gene>
    <name evidence="1" type="primary">crtN</name>
    <name type="ordered locus">SAR2642</name>
</gene>
<evidence type="ECO:0000250" key="1">
    <source>
        <dbReference type="UniProtKB" id="O07855"/>
    </source>
</evidence>
<evidence type="ECO:0000255" key="2"/>
<evidence type="ECO:0000305" key="3"/>
<protein>
    <recommendedName>
        <fullName evidence="1">4,4'-diapophytoene desaturase (4,4'-diaponeurosporene-forming)</fullName>
        <ecNumber evidence="1">1.3.8.-</ecNumber>
    </recommendedName>
    <alternativeName>
        <fullName evidence="1">Dehydrosqualene desaturase</fullName>
    </alternativeName>
</protein>
<feature type="chain" id="PRO_0000272196" description="4,4'-diapophytoene desaturase (4,4'-diaponeurosporene-forming)">
    <location>
        <begin position="1"/>
        <end position="502"/>
    </location>
</feature>
<feature type="binding site" evidence="2">
    <location>
        <begin position="5"/>
        <end position="17"/>
    </location>
    <ligand>
        <name>FAD</name>
        <dbReference type="ChEBI" id="CHEBI:57692"/>
    </ligand>
</feature>
<reference key="1">
    <citation type="journal article" date="2004" name="Proc. Natl. Acad. Sci. U.S.A.">
        <title>Complete genomes of two clinical Staphylococcus aureus strains: evidence for the rapid evolution of virulence and drug resistance.</title>
        <authorList>
            <person name="Holden M.T.G."/>
            <person name="Feil E.J."/>
            <person name="Lindsay J.A."/>
            <person name="Peacock S.J."/>
            <person name="Day N.P.J."/>
            <person name="Enright M.C."/>
            <person name="Foster T.J."/>
            <person name="Moore C.E."/>
            <person name="Hurst L."/>
            <person name="Atkin R."/>
            <person name="Barron A."/>
            <person name="Bason N."/>
            <person name="Bentley S.D."/>
            <person name="Chillingworth C."/>
            <person name="Chillingworth T."/>
            <person name="Churcher C."/>
            <person name="Clark L."/>
            <person name="Corton C."/>
            <person name="Cronin A."/>
            <person name="Doggett J."/>
            <person name="Dowd L."/>
            <person name="Feltwell T."/>
            <person name="Hance Z."/>
            <person name="Harris B."/>
            <person name="Hauser H."/>
            <person name="Holroyd S."/>
            <person name="Jagels K."/>
            <person name="James K.D."/>
            <person name="Lennard N."/>
            <person name="Line A."/>
            <person name="Mayes R."/>
            <person name="Moule S."/>
            <person name="Mungall K."/>
            <person name="Ormond D."/>
            <person name="Quail M.A."/>
            <person name="Rabbinowitsch E."/>
            <person name="Rutherford K.M."/>
            <person name="Sanders M."/>
            <person name="Sharp S."/>
            <person name="Simmonds M."/>
            <person name="Stevens K."/>
            <person name="Whitehead S."/>
            <person name="Barrell B.G."/>
            <person name="Spratt B.G."/>
            <person name="Parkhill J."/>
        </authorList>
    </citation>
    <scope>NUCLEOTIDE SEQUENCE [LARGE SCALE GENOMIC DNA]</scope>
    <source>
        <strain>MRSA252</strain>
    </source>
</reference>
<proteinExistence type="inferred from homology"/>
<name>CRTN_STAAR</name>
<comment type="function">
    <text evidence="1">Involved in the biosynthesis of the yellow-orange carotenoid staphyloxanthin, which plays a role in the virulence via its protective function against oxidative stress. Catalyzes three successive dehydrogenation reactions that lead to the introduction of three double bonds into 4,4'-diapophytoene (dehydrosqualene), with 4,4'-diapophytofluene and 4,4'-diapo-zeta-carotene as intermediates, and 4,4'-diaponeurosporene (the major deep-yellow pigment in staphylococci strains) as the end product.</text>
</comment>
<comment type="catalytic activity">
    <reaction evidence="1">
        <text>15-cis-4,4'-diapophytoene + 3 FAD + 3 H(+) = all-trans-4,4'-diaponeurosporene + 3 FADH2</text>
        <dbReference type="Rhea" id="RHEA:42800"/>
        <dbReference type="ChEBI" id="CHEBI:15378"/>
        <dbReference type="ChEBI" id="CHEBI:57692"/>
        <dbReference type="ChEBI" id="CHEBI:58307"/>
        <dbReference type="ChEBI" id="CHEBI:62738"/>
        <dbReference type="ChEBI" id="CHEBI:62743"/>
    </reaction>
</comment>
<comment type="pathway">
    <text evidence="1">Carotenoid biosynthesis; staphyloxanthin biosynthesis; staphyloxanthin from farnesyl diphosphate: step 2/5.</text>
</comment>
<comment type="similarity">
    <text evidence="3">Belongs to the carotenoid/retinoid oxidoreductase family. CrtN subfamily.</text>
</comment>
<dbReference type="EC" id="1.3.8.-" evidence="1"/>
<dbReference type="EMBL" id="BX571856">
    <property type="protein sequence ID" value="CAG41620.1"/>
    <property type="molecule type" value="Genomic_DNA"/>
</dbReference>
<dbReference type="RefSeq" id="WP_000686164.1">
    <property type="nucleotide sequence ID" value="NC_002952.2"/>
</dbReference>
<dbReference type="SMR" id="Q6GDN7"/>
<dbReference type="KEGG" id="sar:SAR2642"/>
<dbReference type="HOGENOM" id="CLU_019722_2_1_9"/>
<dbReference type="UniPathway" id="UPA00029">
    <property type="reaction ID" value="UER00557"/>
</dbReference>
<dbReference type="Proteomes" id="UP000000596">
    <property type="component" value="Chromosome"/>
</dbReference>
<dbReference type="GO" id="GO:0102223">
    <property type="term" value="F:4,4'-diapophytoene desaturase (4,4'-diaponeurosporene-forming)"/>
    <property type="evidence" value="ECO:0007669"/>
    <property type="project" value="RHEA"/>
</dbReference>
<dbReference type="GO" id="GO:0016117">
    <property type="term" value="P:carotenoid biosynthetic process"/>
    <property type="evidence" value="ECO:0007669"/>
    <property type="project" value="UniProtKB-KW"/>
</dbReference>
<dbReference type="Gene3D" id="3.50.50.60">
    <property type="entry name" value="FAD/NAD(P)-binding domain"/>
    <property type="match status" value="2"/>
</dbReference>
<dbReference type="InterPro" id="IPR002937">
    <property type="entry name" value="Amino_oxidase"/>
</dbReference>
<dbReference type="InterPro" id="IPR014105">
    <property type="entry name" value="Carotenoid/retinoid_OxRdtase"/>
</dbReference>
<dbReference type="InterPro" id="IPR036188">
    <property type="entry name" value="FAD/NAD-bd_sf"/>
</dbReference>
<dbReference type="NCBIfam" id="TIGR02734">
    <property type="entry name" value="crtI_fam"/>
    <property type="match status" value="1"/>
</dbReference>
<dbReference type="PANTHER" id="PTHR43734">
    <property type="entry name" value="PHYTOENE DESATURASE"/>
    <property type="match status" value="1"/>
</dbReference>
<dbReference type="PANTHER" id="PTHR43734:SF1">
    <property type="entry name" value="PHYTOENE DESATURASE"/>
    <property type="match status" value="1"/>
</dbReference>
<dbReference type="Pfam" id="PF01593">
    <property type="entry name" value="Amino_oxidase"/>
    <property type="match status" value="1"/>
</dbReference>
<dbReference type="PRINTS" id="PR00419">
    <property type="entry name" value="ADXRDTASE"/>
</dbReference>
<dbReference type="SUPFAM" id="SSF51905">
    <property type="entry name" value="FAD/NAD(P)-binding domain"/>
    <property type="match status" value="1"/>
</dbReference>
<keyword id="KW-0125">Carotenoid biosynthesis</keyword>
<keyword id="KW-0274">FAD</keyword>
<keyword id="KW-0285">Flavoprotein</keyword>
<keyword id="KW-0560">Oxidoreductase</keyword>
<keyword id="KW-0843">Virulence</keyword>
<accession>Q6GDN7</accession>